<protein>
    <recommendedName>
        <fullName evidence="1">Fumarate reductase subunit C</fullName>
    </recommendedName>
    <alternativeName>
        <fullName evidence="1">Fumarate reductase 15 kDa hydrophobic protein</fullName>
    </alternativeName>
    <alternativeName>
        <fullName evidence="1">Quinol-fumarate reductase subunit C</fullName>
        <shortName evidence="1">QFR subunit C</shortName>
    </alternativeName>
</protein>
<sequence>MTTKRKPYVRPMTSTWWKKLPFYRFYMLREGTAVPAVWFSIELIFGLFALKHGAESWMGFVGFLQNPVVVILNLITLAAALLHTKTWFELAPKAANIIVKDEKMGPEPIIKGLWVVTAVVTVVILYVALFW</sequence>
<organism>
    <name type="scientific">Salmonella choleraesuis (strain SC-B67)</name>
    <dbReference type="NCBI Taxonomy" id="321314"/>
    <lineage>
        <taxon>Bacteria</taxon>
        <taxon>Pseudomonadati</taxon>
        <taxon>Pseudomonadota</taxon>
        <taxon>Gammaproteobacteria</taxon>
        <taxon>Enterobacterales</taxon>
        <taxon>Enterobacteriaceae</taxon>
        <taxon>Salmonella</taxon>
    </lineage>
</organism>
<reference key="1">
    <citation type="journal article" date="2005" name="Nucleic Acids Res.">
        <title>The genome sequence of Salmonella enterica serovar Choleraesuis, a highly invasive and resistant zoonotic pathogen.</title>
        <authorList>
            <person name="Chiu C.-H."/>
            <person name="Tang P."/>
            <person name="Chu C."/>
            <person name="Hu S."/>
            <person name="Bao Q."/>
            <person name="Yu J."/>
            <person name="Chou Y.-Y."/>
            <person name="Wang H.-S."/>
            <person name="Lee Y.-S."/>
        </authorList>
    </citation>
    <scope>NUCLEOTIDE SEQUENCE [LARGE SCALE GENOMIC DNA]</scope>
    <source>
        <strain>SC-B67</strain>
    </source>
</reference>
<feature type="chain" id="PRO_1000045530" description="Fumarate reductase subunit C">
    <location>
        <begin position="1"/>
        <end position="131"/>
    </location>
</feature>
<feature type="transmembrane region" description="Helical" evidence="1">
    <location>
        <begin position="30"/>
        <end position="50"/>
    </location>
</feature>
<feature type="transmembrane region" description="Helical" evidence="1">
    <location>
        <begin position="57"/>
        <end position="77"/>
    </location>
</feature>
<feature type="transmembrane region" description="Helical" evidence="1">
    <location>
        <begin position="109"/>
        <end position="129"/>
    </location>
</feature>
<proteinExistence type="inferred from homology"/>
<accession>Q57GN6</accession>
<evidence type="ECO:0000255" key="1">
    <source>
        <dbReference type="HAMAP-Rule" id="MF_00708"/>
    </source>
</evidence>
<dbReference type="EMBL" id="AE017220">
    <property type="protein sequence ID" value="AAX68126.1"/>
    <property type="molecule type" value="Genomic_DNA"/>
</dbReference>
<dbReference type="RefSeq" id="WP_000208749.1">
    <property type="nucleotide sequence ID" value="NC_006905.1"/>
</dbReference>
<dbReference type="SMR" id="Q57GN6"/>
<dbReference type="KEGG" id="sec:SCH_4220"/>
<dbReference type="HOGENOM" id="CLU_156492_0_0_6"/>
<dbReference type="Proteomes" id="UP000000538">
    <property type="component" value="Chromosome"/>
</dbReference>
<dbReference type="GO" id="GO:0045283">
    <property type="term" value="C:fumarate reductase complex"/>
    <property type="evidence" value="ECO:0007669"/>
    <property type="project" value="UniProtKB-UniRule"/>
</dbReference>
<dbReference type="GO" id="GO:0005886">
    <property type="term" value="C:plasma membrane"/>
    <property type="evidence" value="ECO:0007669"/>
    <property type="project" value="UniProtKB-SubCell"/>
</dbReference>
<dbReference type="GO" id="GO:0000104">
    <property type="term" value="F:succinate dehydrogenase activity"/>
    <property type="evidence" value="ECO:0007669"/>
    <property type="project" value="UniProtKB-UniRule"/>
</dbReference>
<dbReference type="CDD" id="cd00546">
    <property type="entry name" value="QFR_TypeD_subunitC"/>
    <property type="match status" value="1"/>
</dbReference>
<dbReference type="Gene3D" id="1.20.1300.10">
    <property type="entry name" value="Fumarate reductase/succinate dehydrogenase, transmembrane subunit"/>
    <property type="match status" value="1"/>
</dbReference>
<dbReference type="HAMAP" id="MF_00708">
    <property type="entry name" value="Fumarate_red_C"/>
    <property type="match status" value="1"/>
</dbReference>
<dbReference type="InterPro" id="IPR003510">
    <property type="entry name" value="Fumarate_red_C"/>
</dbReference>
<dbReference type="InterPro" id="IPR034804">
    <property type="entry name" value="SQR/QFR_C/D"/>
</dbReference>
<dbReference type="NCBIfam" id="NF003445">
    <property type="entry name" value="PRK04987.1"/>
    <property type="match status" value="1"/>
</dbReference>
<dbReference type="Pfam" id="PF02300">
    <property type="entry name" value="Fumarate_red_C"/>
    <property type="match status" value="1"/>
</dbReference>
<dbReference type="PIRSF" id="PIRSF000180">
    <property type="entry name" value="FrdC"/>
    <property type="match status" value="1"/>
</dbReference>
<dbReference type="SUPFAM" id="SSF81343">
    <property type="entry name" value="Fumarate reductase respiratory complex transmembrane subunits"/>
    <property type="match status" value="1"/>
</dbReference>
<comment type="function">
    <text evidence="1">Two distinct, membrane-bound, FAD-containing enzymes are responsible for the catalysis of fumarate and succinate interconversion; fumarate reductase is used in anaerobic growth, and succinate dehydrogenase is used in aerobic growth. Anchors the catalytic components of the fumarate reductase complex to the cell inner membrane, binds quinones.</text>
</comment>
<comment type="subunit">
    <text evidence="1">Part of an enzyme complex containing four subunits: a flavoprotein (FrdA), an iron-sulfur protein (FrdB), and two hydrophobic anchor proteins (FrdC and FrdD).</text>
</comment>
<comment type="subcellular location">
    <subcellularLocation>
        <location evidence="1">Cell inner membrane</location>
        <topology evidence="1">Multi-pass membrane protein</topology>
    </subcellularLocation>
</comment>
<comment type="similarity">
    <text evidence="1">Belongs to the FrdC family.</text>
</comment>
<name>FRDC_SALCH</name>
<keyword id="KW-0997">Cell inner membrane</keyword>
<keyword id="KW-1003">Cell membrane</keyword>
<keyword id="KW-0472">Membrane</keyword>
<keyword id="KW-0812">Transmembrane</keyword>
<keyword id="KW-1133">Transmembrane helix</keyword>
<gene>
    <name evidence="1" type="primary">frdC</name>
    <name type="ordered locus">SCH_4220</name>
</gene>